<keyword id="KW-0007">Acetylation</keyword>
<keyword id="KW-0067">ATP-binding</keyword>
<keyword id="KW-0963">Cytoplasm</keyword>
<keyword id="KW-1017">Isopeptide bond</keyword>
<keyword id="KW-0547">Nucleotide-binding</keyword>
<keyword id="KW-0539">Nucleus</keyword>
<keyword id="KW-0647">Proteasome</keyword>
<keyword id="KW-1185">Reference proteome</keyword>
<keyword id="KW-0832">Ubl conjugation</keyword>
<evidence type="ECO:0000250" key="1"/>
<evidence type="ECO:0000250" key="2">
    <source>
        <dbReference type="UniProtKB" id="Q9SEI2"/>
    </source>
</evidence>
<evidence type="ECO:0000255" key="3"/>
<evidence type="ECO:0000269" key="4">
    <source>
    </source>
</evidence>
<evidence type="ECO:0000269" key="5">
    <source>
    </source>
</evidence>
<evidence type="ECO:0000305" key="6"/>
<evidence type="ECO:0000305" key="7">
    <source>
    </source>
</evidence>
<evidence type="ECO:0007744" key="8">
    <source>
    </source>
</evidence>
<comment type="function">
    <text>The 26S proteasome is involved in the ATP-dependent degradation of ubiquitinated proteins. The regulatory (or ATPase) complex confers ATP dependency and substrate specificity to the 26S complex.</text>
</comment>
<comment type="subunit">
    <text evidence="4 5">Component of the 19S regulatory particle (RP/PA700) base subcomplex of the 26S proteasome. The 26S proteasome is composed of a core protease (CP), known as the 20S proteasome, capped at one or both ends by the 19S regulatory particle (RP/PA700). The RP/PA700 complex is composed of at least 17 different subunits in two subcomplexes, the base and the lid, which form the portions proximal and distal to the 20S proteolytic core, respectively.</text>
</comment>
<comment type="subcellular location">
    <subcellularLocation>
        <location evidence="1">Cytoplasm</location>
    </subcellularLocation>
    <subcellularLocation>
        <location evidence="1">Nucleus</location>
    </subcellularLocation>
</comment>
<comment type="similarity">
    <text evidence="6">Belongs to the AAA ATPase family.</text>
</comment>
<protein>
    <recommendedName>
        <fullName>26S proteasome regulatory subunit 8 homolog A</fullName>
    </recommendedName>
    <alternativeName>
        <fullName>26S proteasome AAA-ATPase subunit RPT6a</fullName>
    </alternativeName>
    <alternativeName>
        <fullName>26S proteasome subunit 8 homolog A</fullName>
    </alternativeName>
    <alternativeName>
        <fullName>Regulatory particle triple-A ATPase subunit 6a</fullName>
    </alternativeName>
</protein>
<reference key="1">
    <citation type="journal article" date="1999" name="Plant J.">
        <title>Structural and functional analysis of the six regulatory particle triple-A ATPase subunits from the Arabidopsis 26S proteasome.</title>
        <authorList>
            <person name="Fu H."/>
            <person name="Doelling J.H."/>
            <person name="Rubin D.M."/>
            <person name="Vierstra R.D."/>
        </authorList>
    </citation>
    <scope>NUCLEOTIDE SEQUENCE [MRNA]</scope>
    <scope>GENE FAMILY</scope>
    <scope>NOMENCLATURE</scope>
    <source>
        <strain>cv. Columbia</strain>
    </source>
</reference>
<reference key="2">
    <citation type="submission" date="2000-06" db="EMBL/GenBank/DDBJ databases">
        <title>Identification of a cDNA from Arabidopsis thaliana for a member of conserved Sug1 CAD family.</title>
        <authorList>
            <person name="Kuromori T."/>
            <person name="Yamamoto M."/>
        </authorList>
    </citation>
    <scope>NUCLEOTIDE SEQUENCE [MRNA]</scope>
</reference>
<reference key="3">
    <citation type="journal article" date="2000" name="Nature">
        <title>Sequence and analysis of chromosome 5 of the plant Arabidopsis thaliana.</title>
        <authorList>
            <person name="Tabata S."/>
            <person name="Kaneko T."/>
            <person name="Nakamura Y."/>
            <person name="Kotani H."/>
            <person name="Kato T."/>
            <person name="Asamizu E."/>
            <person name="Miyajima N."/>
            <person name="Sasamoto S."/>
            <person name="Kimura T."/>
            <person name="Hosouchi T."/>
            <person name="Kawashima K."/>
            <person name="Kohara M."/>
            <person name="Matsumoto M."/>
            <person name="Matsuno A."/>
            <person name="Muraki A."/>
            <person name="Nakayama S."/>
            <person name="Nakazaki N."/>
            <person name="Naruo K."/>
            <person name="Okumura S."/>
            <person name="Shinpo S."/>
            <person name="Takeuchi C."/>
            <person name="Wada T."/>
            <person name="Watanabe A."/>
            <person name="Yamada M."/>
            <person name="Yasuda M."/>
            <person name="Sato S."/>
            <person name="de la Bastide M."/>
            <person name="Huang E."/>
            <person name="Spiegel L."/>
            <person name="Gnoj L."/>
            <person name="O'Shaughnessy A."/>
            <person name="Preston R."/>
            <person name="Habermann K."/>
            <person name="Murray J."/>
            <person name="Johnson D."/>
            <person name="Rohlfing T."/>
            <person name="Nelson J."/>
            <person name="Stoneking T."/>
            <person name="Pepin K."/>
            <person name="Spieth J."/>
            <person name="Sekhon M."/>
            <person name="Armstrong J."/>
            <person name="Becker M."/>
            <person name="Belter E."/>
            <person name="Cordum H."/>
            <person name="Cordes M."/>
            <person name="Courtney L."/>
            <person name="Courtney W."/>
            <person name="Dante M."/>
            <person name="Du H."/>
            <person name="Edwards J."/>
            <person name="Fryman J."/>
            <person name="Haakensen B."/>
            <person name="Lamar E."/>
            <person name="Latreille P."/>
            <person name="Leonard S."/>
            <person name="Meyer R."/>
            <person name="Mulvaney E."/>
            <person name="Ozersky P."/>
            <person name="Riley A."/>
            <person name="Strowmatt C."/>
            <person name="Wagner-McPherson C."/>
            <person name="Wollam A."/>
            <person name="Yoakum M."/>
            <person name="Bell M."/>
            <person name="Dedhia N."/>
            <person name="Parnell L."/>
            <person name="Shah R."/>
            <person name="Rodriguez M."/>
            <person name="Hoon See L."/>
            <person name="Vil D."/>
            <person name="Baker J."/>
            <person name="Kirchoff K."/>
            <person name="Toth K."/>
            <person name="King L."/>
            <person name="Bahret A."/>
            <person name="Miller B."/>
            <person name="Marra M.A."/>
            <person name="Martienssen R."/>
            <person name="McCombie W.R."/>
            <person name="Wilson R.K."/>
            <person name="Murphy G."/>
            <person name="Bancroft I."/>
            <person name="Volckaert G."/>
            <person name="Wambutt R."/>
            <person name="Duesterhoeft A."/>
            <person name="Stiekema W."/>
            <person name="Pohl T."/>
            <person name="Entian K.-D."/>
            <person name="Terryn N."/>
            <person name="Hartley N."/>
            <person name="Bent E."/>
            <person name="Johnson S."/>
            <person name="Langham S.-A."/>
            <person name="McCullagh B."/>
            <person name="Robben J."/>
            <person name="Grymonprez B."/>
            <person name="Zimmermann W."/>
            <person name="Ramsperger U."/>
            <person name="Wedler H."/>
            <person name="Balke K."/>
            <person name="Wedler E."/>
            <person name="Peters S."/>
            <person name="van Staveren M."/>
            <person name="Dirkse W."/>
            <person name="Mooijman P."/>
            <person name="Klein Lankhorst R."/>
            <person name="Weitzenegger T."/>
            <person name="Bothe G."/>
            <person name="Rose M."/>
            <person name="Hauf J."/>
            <person name="Berneiser S."/>
            <person name="Hempel S."/>
            <person name="Feldpausch M."/>
            <person name="Lamberth S."/>
            <person name="Villarroel R."/>
            <person name="Gielen J."/>
            <person name="Ardiles W."/>
            <person name="Bents O."/>
            <person name="Lemcke K."/>
            <person name="Kolesov G."/>
            <person name="Mayer K.F.X."/>
            <person name="Rudd S."/>
            <person name="Schoof H."/>
            <person name="Schueller C."/>
            <person name="Zaccaria P."/>
            <person name="Mewes H.-W."/>
            <person name="Bevan M."/>
            <person name="Fransz P.F."/>
        </authorList>
    </citation>
    <scope>NUCLEOTIDE SEQUENCE [LARGE SCALE GENOMIC DNA]</scope>
    <source>
        <strain>cv. Columbia</strain>
    </source>
</reference>
<reference key="4">
    <citation type="journal article" date="2017" name="Plant J.">
        <title>Araport11: a complete reannotation of the Arabidopsis thaliana reference genome.</title>
        <authorList>
            <person name="Cheng C.Y."/>
            <person name="Krishnakumar V."/>
            <person name="Chan A.P."/>
            <person name="Thibaud-Nissen F."/>
            <person name="Schobel S."/>
            <person name="Town C.D."/>
        </authorList>
    </citation>
    <scope>GENOME REANNOTATION</scope>
    <source>
        <strain>cv. Columbia</strain>
    </source>
</reference>
<reference key="5">
    <citation type="journal article" date="2003" name="Science">
        <title>Empirical analysis of transcriptional activity in the Arabidopsis genome.</title>
        <authorList>
            <person name="Yamada K."/>
            <person name="Lim J."/>
            <person name="Dale J.M."/>
            <person name="Chen H."/>
            <person name="Shinn P."/>
            <person name="Palm C.J."/>
            <person name="Southwick A.M."/>
            <person name="Wu H.C."/>
            <person name="Kim C.J."/>
            <person name="Nguyen M."/>
            <person name="Pham P.K."/>
            <person name="Cheuk R.F."/>
            <person name="Karlin-Newmann G."/>
            <person name="Liu S.X."/>
            <person name="Lam B."/>
            <person name="Sakano H."/>
            <person name="Wu T."/>
            <person name="Yu G."/>
            <person name="Miranda M."/>
            <person name="Quach H.L."/>
            <person name="Tripp M."/>
            <person name="Chang C.H."/>
            <person name="Lee J.M."/>
            <person name="Toriumi M.J."/>
            <person name="Chan M.M."/>
            <person name="Tang C.C."/>
            <person name="Onodera C.S."/>
            <person name="Deng J.M."/>
            <person name="Akiyama K."/>
            <person name="Ansari Y."/>
            <person name="Arakawa T."/>
            <person name="Banh J."/>
            <person name="Banno F."/>
            <person name="Bowser L."/>
            <person name="Brooks S.Y."/>
            <person name="Carninci P."/>
            <person name="Chao Q."/>
            <person name="Choy N."/>
            <person name="Enju A."/>
            <person name="Goldsmith A.D."/>
            <person name="Gurjal M."/>
            <person name="Hansen N.F."/>
            <person name="Hayashizaki Y."/>
            <person name="Johnson-Hopson C."/>
            <person name="Hsuan V.W."/>
            <person name="Iida K."/>
            <person name="Karnes M."/>
            <person name="Khan S."/>
            <person name="Koesema E."/>
            <person name="Ishida J."/>
            <person name="Jiang P.X."/>
            <person name="Jones T."/>
            <person name="Kawai J."/>
            <person name="Kamiya A."/>
            <person name="Meyers C."/>
            <person name="Nakajima M."/>
            <person name="Narusaka M."/>
            <person name="Seki M."/>
            <person name="Sakurai T."/>
            <person name="Satou M."/>
            <person name="Tamse R."/>
            <person name="Vaysberg M."/>
            <person name="Wallender E.K."/>
            <person name="Wong C."/>
            <person name="Yamamura Y."/>
            <person name="Yuan S."/>
            <person name="Shinozaki K."/>
            <person name="Davis R.W."/>
            <person name="Theologis A."/>
            <person name="Ecker J.R."/>
        </authorList>
    </citation>
    <scope>NUCLEOTIDE SEQUENCE [LARGE SCALE MRNA]</scope>
    <source>
        <strain>cv. Columbia</strain>
    </source>
</reference>
<reference key="6">
    <citation type="journal article" date="2004" name="J. Biol. Chem.">
        <title>Purification of the Arabidopsis 26 S proteasome: biochemical and molecular analyses revealed the presence of multiple isoforms.</title>
        <authorList>
            <person name="Yang P."/>
            <person name="Fu H."/>
            <person name="Walker J."/>
            <person name="Papa C.M."/>
            <person name="Smalle J."/>
            <person name="Ju Y.-M."/>
            <person name="Vierstra R.D."/>
        </authorList>
    </citation>
    <scope>SUBUNIT</scope>
    <scope>IDENTIFICATION BY MASS SPECTROMETRY</scope>
</reference>
<reference key="7">
    <citation type="journal article" date="2010" name="J. Biol. Chem.">
        <title>Affinity purification of the Arabidopsis 26 S proteasome reveals a diverse array of plant proteolytic complexes.</title>
        <authorList>
            <person name="Book A.J."/>
            <person name="Gladman N.P."/>
            <person name="Lee S.S."/>
            <person name="Scalf M."/>
            <person name="Smith L.M."/>
            <person name="Vierstra R.D."/>
        </authorList>
    </citation>
    <scope>IDENTIFICATION BY MASS SPECTROMETRY</scope>
    <scope>CHARACTERIZATION OF THE 26S PROTEASOME COMPLEX</scope>
    <scope>SUBUNIT</scope>
    <scope>CLEAVAGE OF INITIATOR METHIONINE</scope>
</reference>
<reference key="8">
    <citation type="journal article" date="2012" name="Mol. Cell. Proteomics">
        <title>Comparative large-scale characterisation of plant vs. mammal proteins reveals similar and idiosyncratic N-alpha acetylation features.</title>
        <authorList>
            <person name="Bienvenut W.V."/>
            <person name="Sumpton D."/>
            <person name="Martinez A."/>
            <person name="Lilla S."/>
            <person name="Espagne C."/>
            <person name="Meinnel T."/>
            <person name="Giglione C."/>
        </authorList>
    </citation>
    <scope>ACETYLATION [LARGE SCALE ANALYSIS] AT ALA-2</scope>
    <scope>CLEAVAGE OF INITIATOR METHIONINE [LARGE SCALE ANALYSIS]</scope>
    <scope>IDENTIFICATION BY MASS SPECTROMETRY [LARGE SCALE ANALYSIS]</scope>
</reference>
<accession>Q9C5U3</accession>
<accession>Q9SEI1</accession>
<feature type="initiator methionine" description="Removed" evidence="7 8">
    <location>
        <position position="1"/>
    </location>
</feature>
<feature type="chain" id="PRO_0000391487" description="26S proteasome regulatory subunit 8 homolog A">
    <location>
        <begin position="2"/>
        <end position="419"/>
    </location>
</feature>
<feature type="binding site" evidence="3">
    <location>
        <begin position="202"/>
        <end position="209"/>
    </location>
    <ligand>
        <name>ATP</name>
        <dbReference type="ChEBI" id="CHEBI:30616"/>
    </ligand>
</feature>
<feature type="modified residue" description="N-acetylalanine" evidence="8">
    <location>
        <position position="2"/>
    </location>
</feature>
<feature type="cross-link" description="Glycyl lysine isopeptide (Lys-Gly) (interchain with G-Cter in ubiquitin)" evidence="2">
    <location>
        <position position="406"/>
    </location>
</feature>
<organism>
    <name type="scientific">Arabidopsis thaliana</name>
    <name type="common">Mouse-ear cress</name>
    <dbReference type="NCBI Taxonomy" id="3702"/>
    <lineage>
        <taxon>Eukaryota</taxon>
        <taxon>Viridiplantae</taxon>
        <taxon>Streptophyta</taxon>
        <taxon>Embryophyta</taxon>
        <taxon>Tracheophyta</taxon>
        <taxon>Spermatophyta</taxon>
        <taxon>Magnoliopsida</taxon>
        <taxon>eudicotyledons</taxon>
        <taxon>Gunneridae</taxon>
        <taxon>Pentapetalae</taxon>
        <taxon>rosids</taxon>
        <taxon>malvids</taxon>
        <taxon>Brassicales</taxon>
        <taxon>Brassicaceae</taxon>
        <taxon>Camelineae</taxon>
        <taxon>Arabidopsis</taxon>
    </lineage>
</organism>
<sequence>MAAVGVDSRRPETAMEETCNVKGAAAKQGEGLKQYYLQHIHELQRQLRQKTNNLNRLEAQRNELNSRVRMLREELQLLQEPGSYVGEVVKVMGKNKVLVKVHPEGKYVVDIDKSIDITKITPSTRVALRNDSYVLHLVLPSKVDPLVNLMKVEKVPDSTYDMIGGLDQQIKEIKEVIELPIKHPELFESLGIAQPKGVLLYGPPGTGKTLLARAVAHHTDCTFIRVSGSELVQKYIGEGSRMVRELFVMAREHAPSIIFMDEIDSIGSARMESGSGNGDSEVQRTMLELLNQLDGFEASNKIKVLMATNRIDILDQALLRPGRIDRKIEFPNPNEESRFDILKIHSRKMNLMRGIDLKKIAEKMNGASGAELKAVCTEAGMFALRERRVHVTQEDFEMAVAKVMKKDTEKNMSLRKLWK</sequence>
<dbReference type="EMBL" id="AF123395">
    <property type="protein sequence ID" value="AAF22526.1"/>
    <property type="molecule type" value="mRNA"/>
</dbReference>
<dbReference type="EMBL" id="AB044348">
    <property type="protein sequence ID" value="BAB40755.1"/>
    <property type="molecule type" value="mRNA"/>
</dbReference>
<dbReference type="EMBL" id="AF296836">
    <property type="status" value="NOT_ANNOTATED_CDS"/>
    <property type="molecule type" value="Genomic_DNA"/>
</dbReference>
<dbReference type="EMBL" id="CP002688">
    <property type="protein sequence ID" value="AED92777.1"/>
    <property type="molecule type" value="Genomic_DNA"/>
</dbReference>
<dbReference type="EMBL" id="CP002688">
    <property type="protein sequence ID" value="ANM69329.1"/>
    <property type="molecule type" value="Genomic_DNA"/>
</dbReference>
<dbReference type="EMBL" id="AY065174">
    <property type="protein sequence ID" value="AAL38350.1"/>
    <property type="molecule type" value="mRNA"/>
</dbReference>
<dbReference type="EMBL" id="BT009668">
    <property type="protein sequence ID" value="AAP78936.1"/>
    <property type="molecule type" value="mRNA"/>
</dbReference>
<dbReference type="RefSeq" id="NP_001318606.1">
    <property type="nucleotide sequence ID" value="NM_001343633.1"/>
</dbReference>
<dbReference type="RefSeq" id="NP_568389.1">
    <property type="nucleotide sequence ID" value="NM_122006.4"/>
</dbReference>
<dbReference type="SMR" id="Q9C5U3"/>
<dbReference type="BioGRID" id="17397">
    <property type="interactions" value="91"/>
</dbReference>
<dbReference type="FunCoup" id="Q9C5U3">
    <property type="interactions" value="4194"/>
</dbReference>
<dbReference type="IntAct" id="Q9C5U3">
    <property type="interactions" value="9"/>
</dbReference>
<dbReference type="STRING" id="3702.Q9C5U3"/>
<dbReference type="iPTMnet" id="Q9C5U3"/>
<dbReference type="MetOSite" id="Q9C5U3"/>
<dbReference type="PaxDb" id="3702-AT5G19990.1"/>
<dbReference type="ProteomicsDB" id="226224"/>
<dbReference type="EnsemblPlants" id="AT5G19990.1">
    <property type="protein sequence ID" value="AT5G19990.1"/>
    <property type="gene ID" value="AT5G19990"/>
</dbReference>
<dbReference type="EnsemblPlants" id="AT5G19990.3">
    <property type="protein sequence ID" value="AT5G19990.3"/>
    <property type="gene ID" value="AT5G19990"/>
</dbReference>
<dbReference type="GeneID" id="832121"/>
<dbReference type="Gramene" id="AT5G19990.1">
    <property type="protein sequence ID" value="AT5G19990.1"/>
    <property type="gene ID" value="AT5G19990"/>
</dbReference>
<dbReference type="Gramene" id="AT5G19990.3">
    <property type="protein sequence ID" value="AT5G19990.3"/>
    <property type="gene ID" value="AT5G19990"/>
</dbReference>
<dbReference type="KEGG" id="ath:AT5G19990"/>
<dbReference type="Araport" id="AT5G19990"/>
<dbReference type="TAIR" id="AT5G19990">
    <property type="gene designation" value="RPT6A"/>
</dbReference>
<dbReference type="eggNOG" id="KOG0728">
    <property type="taxonomic scope" value="Eukaryota"/>
</dbReference>
<dbReference type="HOGENOM" id="CLU_000688_2_1_1"/>
<dbReference type="InParanoid" id="Q9C5U3"/>
<dbReference type="OrthoDB" id="1850959at2759"/>
<dbReference type="PhylomeDB" id="Q9C5U3"/>
<dbReference type="PRO" id="PR:Q9C5U3"/>
<dbReference type="Proteomes" id="UP000006548">
    <property type="component" value="Chromosome 5"/>
</dbReference>
<dbReference type="ExpressionAtlas" id="Q9C5U3">
    <property type="expression patterns" value="baseline and differential"/>
</dbReference>
<dbReference type="GO" id="GO:0005634">
    <property type="term" value="C:nucleus"/>
    <property type="evidence" value="ECO:0000304"/>
    <property type="project" value="TAIR"/>
</dbReference>
<dbReference type="GO" id="GO:0009536">
    <property type="term" value="C:plastid"/>
    <property type="evidence" value="ECO:0007005"/>
    <property type="project" value="TAIR"/>
</dbReference>
<dbReference type="GO" id="GO:0000502">
    <property type="term" value="C:proteasome complex"/>
    <property type="evidence" value="ECO:0000314"/>
    <property type="project" value="TAIR"/>
</dbReference>
<dbReference type="GO" id="GO:0005524">
    <property type="term" value="F:ATP binding"/>
    <property type="evidence" value="ECO:0007669"/>
    <property type="project" value="UniProtKB-KW"/>
</dbReference>
<dbReference type="GO" id="GO:0016887">
    <property type="term" value="F:ATP hydrolysis activity"/>
    <property type="evidence" value="ECO:0007669"/>
    <property type="project" value="InterPro"/>
</dbReference>
<dbReference type="CDD" id="cd19502">
    <property type="entry name" value="RecA-like_PAN_like"/>
    <property type="match status" value="1"/>
</dbReference>
<dbReference type="FunFam" id="1.10.8.60:FF:000006">
    <property type="entry name" value="26S protease regulatory subunit 8"/>
    <property type="match status" value="1"/>
</dbReference>
<dbReference type="FunFam" id="2.40.50.140:FF:000044">
    <property type="entry name" value="26S protease regulatory subunit 8"/>
    <property type="match status" value="1"/>
</dbReference>
<dbReference type="FunFam" id="3.40.50.300:FF:000030">
    <property type="entry name" value="26S protease regulatory subunit 8"/>
    <property type="match status" value="1"/>
</dbReference>
<dbReference type="Gene3D" id="1.10.8.60">
    <property type="match status" value="1"/>
</dbReference>
<dbReference type="Gene3D" id="2.40.50.140">
    <property type="entry name" value="Nucleic acid-binding proteins"/>
    <property type="match status" value="1"/>
</dbReference>
<dbReference type="Gene3D" id="3.40.50.300">
    <property type="entry name" value="P-loop containing nucleotide triphosphate hydrolases"/>
    <property type="match status" value="1"/>
</dbReference>
<dbReference type="InterPro" id="IPR050221">
    <property type="entry name" value="26S_Proteasome_ATPase"/>
</dbReference>
<dbReference type="InterPro" id="IPR003593">
    <property type="entry name" value="AAA+_ATPase"/>
</dbReference>
<dbReference type="InterPro" id="IPR041569">
    <property type="entry name" value="AAA_lid_3"/>
</dbReference>
<dbReference type="InterPro" id="IPR003959">
    <property type="entry name" value="ATPase_AAA_core"/>
</dbReference>
<dbReference type="InterPro" id="IPR003960">
    <property type="entry name" value="ATPase_AAA_CS"/>
</dbReference>
<dbReference type="InterPro" id="IPR012340">
    <property type="entry name" value="NA-bd_OB-fold"/>
</dbReference>
<dbReference type="InterPro" id="IPR027417">
    <property type="entry name" value="P-loop_NTPase"/>
</dbReference>
<dbReference type="InterPro" id="IPR032501">
    <property type="entry name" value="Prot_ATP_ID_OB_2nd"/>
</dbReference>
<dbReference type="PANTHER" id="PTHR23073">
    <property type="entry name" value="26S PROTEASOME REGULATORY SUBUNIT"/>
    <property type="match status" value="1"/>
</dbReference>
<dbReference type="Pfam" id="PF00004">
    <property type="entry name" value="AAA"/>
    <property type="match status" value="1"/>
</dbReference>
<dbReference type="Pfam" id="PF17862">
    <property type="entry name" value="AAA_lid_3"/>
    <property type="match status" value="1"/>
</dbReference>
<dbReference type="Pfam" id="PF16450">
    <property type="entry name" value="Prot_ATP_ID_OB_C"/>
    <property type="match status" value="1"/>
</dbReference>
<dbReference type="SMART" id="SM00382">
    <property type="entry name" value="AAA"/>
    <property type="match status" value="1"/>
</dbReference>
<dbReference type="SUPFAM" id="SSF52540">
    <property type="entry name" value="P-loop containing nucleoside triphosphate hydrolases"/>
    <property type="match status" value="1"/>
</dbReference>
<dbReference type="PROSITE" id="PS00674">
    <property type="entry name" value="AAA"/>
    <property type="match status" value="1"/>
</dbReference>
<gene>
    <name type="primary">RPT6A</name>
    <name type="synonym">SUG1</name>
    <name type="ordered locus">At5g19990</name>
    <name type="ORF">F28I16.140</name>
</gene>
<proteinExistence type="evidence at protein level"/>
<name>PRS8A_ARATH</name>